<name>PSAJ_CHLSC</name>
<evidence type="ECO:0000255" key="1">
    <source>
        <dbReference type="HAMAP-Rule" id="MF_00522"/>
    </source>
</evidence>
<geneLocation type="chloroplast"/>
<comment type="function">
    <text evidence="1">May help in the organization of the PsaE and PsaF subunits.</text>
</comment>
<comment type="subcellular location">
    <subcellularLocation>
        <location evidence="1">Plastid</location>
        <location evidence="1">Chloroplast thylakoid membrane</location>
        <topology evidence="1">Single-pass membrane protein</topology>
    </subcellularLocation>
</comment>
<comment type="similarity">
    <text evidence="1">Belongs to the PsaJ family.</text>
</comment>
<keyword id="KW-0150">Chloroplast</keyword>
<keyword id="KW-0472">Membrane</keyword>
<keyword id="KW-0602">Photosynthesis</keyword>
<keyword id="KW-0603">Photosystem I</keyword>
<keyword id="KW-0934">Plastid</keyword>
<keyword id="KW-0793">Thylakoid</keyword>
<keyword id="KW-0812">Transmembrane</keyword>
<keyword id="KW-1133">Transmembrane helix</keyword>
<proteinExistence type="inferred from homology"/>
<reference key="1">
    <citation type="journal article" date="2007" name="Mol. Phylogenet. Evol.">
        <title>Phylogenetic and evolutionary implications of complete chloroplast genome sequences of four early-diverging angiosperms: Buxus (Buxaceae), Chloranthus (Chloranthaceae), Dioscorea (Dioscoreaceae), and Illicium (Schisandraceae).</title>
        <authorList>
            <person name="Hansen D.R."/>
            <person name="Dastidar S.G."/>
            <person name="Cai Z."/>
            <person name="Penaflor C."/>
            <person name="Kuehl J.V."/>
            <person name="Boore J.L."/>
            <person name="Jansen R.K."/>
        </authorList>
    </citation>
    <scope>NUCLEOTIDE SEQUENCE [LARGE SCALE GENOMIC DNA]</scope>
</reference>
<gene>
    <name evidence="1" type="primary">psaJ</name>
</gene>
<organism>
    <name type="scientific">Chloranthus spicatus</name>
    <name type="common">Chulantree</name>
    <name type="synonym">Nigrina spicata</name>
    <dbReference type="NCBI Taxonomy" id="13006"/>
    <lineage>
        <taxon>Eukaryota</taxon>
        <taxon>Viridiplantae</taxon>
        <taxon>Streptophyta</taxon>
        <taxon>Embryophyta</taxon>
        <taxon>Tracheophyta</taxon>
        <taxon>Spermatophyta</taxon>
        <taxon>Magnoliopsida</taxon>
        <taxon>Chloranthales</taxon>
        <taxon>Chloranthaceae</taxon>
        <taxon>Chloranthus</taxon>
    </lineage>
</organism>
<accession>A6MME2</accession>
<protein>
    <recommendedName>
        <fullName evidence="1">Photosystem I reaction center subunit IX</fullName>
    </recommendedName>
    <alternativeName>
        <fullName evidence="1">PSI-J</fullName>
    </alternativeName>
</protein>
<dbReference type="EMBL" id="EF380352">
    <property type="protein sequence ID" value="ABQ43280.1"/>
    <property type="molecule type" value="Genomic_DNA"/>
</dbReference>
<dbReference type="RefSeq" id="YP_001294118.1">
    <property type="nucleotide sequence ID" value="NC_009598.1"/>
</dbReference>
<dbReference type="SMR" id="A6MME2"/>
<dbReference type="GeneID" id="5236527"/>
<dbReference type="GO" id="GO:0009535">
    <property type="term" value="C:chloroplast thylakoid membrane"/>
    <property type="evidence" value="ECO:0007669"/>
    <property type="project" value="UniProtKB-SubCell"/>
</dbReference>
<dbReference type="GO" id="GO:0009522">
    <property type="term" value="C:photosystem I"/>
    <property type="evidence" value="ECO:0007669"/>
    <property type="project" value="UniProtKB-KW"/>
</dbReference>
<dbReference type="GO" id="GO:0015979">
    <property type="term" value="P:photosynthesis"/>
    <property type="evidence" value="ECO:0007669"/>
    <property type="project" value="UniProtKB-UniRule"/>
</dbReference>
<dbReference type="FunFam" id="1.20.5.510:FF:000001">
    <property type="entry name" value="Photosystem I reaction center subunit IX"/>
    <property type="match status" value="1"/>
</dbReference>
<dbReference type="Gene3D" id="1.20.5.510">
    <property type="entry name" value="Single helix bin"/>
    <property type="match status" value="1"/>
</dbReference>
<dbReference type="HAMAP" id="MF_00522">
    <property type="entry name" value="PSI_PsaJ"/>
    <property type="match status" value="1"/>
</dbReference>
<dbReference type="InterPro" id="IPR002615">
    <property type="entry name" value="PSI_PsaJ"/>
</dbReference>
<dbReference type="InterPro" id="IPR036062">
    <property type="entry name" value="PSI_PsaJ_sf"/>
</dbReference>
<dbReference type="PANTHER" id="PTHR36082">
    <property type="match status" value="1"/>
</dbReference>
<dbReference type="PANTHER" id="PTHR36082:SF2">
    <property type="entry name" value="PHOTOSYSTEM I REACTION CENTER SUBUNIT IX"/>
    <property type="match status" value="1"/>
</dbReference>
<dbReference type="Pfam" id="PF01701">
    <property type="entry name" value="PSI_PsaJ"/>
    <property type="match status" value="1"/>
</dbReference>
<dbReference type="SUPFAM" id="SSF81544">
    <property type="entry name" value="Subunit IX of photosystem I reaction centre, PsaJ"/>
    <property type="match status" value="1"/>
</dbReference>
<sequence>MRDIKTYLSVAPVLATLWFGSLAGLLIEINRLFPDALAFPFF</sequence>
<feature type="chain" id="PRO_0000354135" description="Photosystem I reaction center subunit IX">
    <location>
        <begin position="1"/>
        <end position="42"/>
    </location>
</feature>
<feature type="transmembrane region" description="Helical" evidence="1">
    <location>
        <begin position="7"/>
        <end position="27"/>
    </location>
</feature>